<feature type="chain" id="PRO_0000453491" description="Monooxygenase dmxR10">
    <location>
        <begin position="1"/>
        <end position="150"/>
    </location>
</feature>
<organism>
    <name type="scientific">Cryptosporiopsis sp. (strain 8999)</name>
    <dbReference type="NCBI Taxonomy" id="2572248"/>
    <lineage>
        <taxon>Eukaryota</taxon>
        <taxon>Fungi</taxon>
        <taxon>Dikarya</taxon>
        <taxon>Ascomycota</taxon>
        <taxon>Pezizomycotina</taxon>
        <taxon>Leotiomycetes</taxon>
        <taxon>Helotiales</taxon>
        <taxon>Dermateaceae</taxon>
        <taxon>Cryptosporiopsis</taxon>
    </lineage>
</organism>
<name>DMR10_CRYX8</name>
<sequence length="150" mass="17005">MPGPAETQAATLAKFIEGWKTFTPEAWTETWTDDCTQNFLPFTMGVPPRTKPEVLKLLPSLLGVLHNYKLEIYSVLHDASKGKAAIYATSFADTPFGDFKWTNEYAVFLTFSEDGTQVSKLEEMVDTAFYKEFFPKFQKYMIEKGAPANH</sequence>
<protein>
    <recommendedName>
        <fullName evidence="2">Monooxygenase dmxR10</fullName>
        <ecNumber evidence="4">1.-.-.-</ecNumber>
    </recommendedName>
    <alternativeName>
        <fullName evidence="2">Dimeric xanthone biosynthesis cluster protein R10</fullName>
    </alternativeName>
</protein>
<gene>
    <name evidence="2" type="primary">dmxR10</name>
</gene>
<comment type="function">
    <text evidence="1 4">Monooxygenase; part of the gene cluster that mediates the biosynthesis of the dimeric xanthones cryptosporioptides (PubMed:30996871). The pathway begins with the synthesis of atrochrysone thioester by the polyketide synthase dmx-nrPKS (Probable). The atrochrysone carboxyl ACP thioesterase dmxR1 then breaks the thioester bond and releases the atrochrysone carboxylic acid from dmx-nrPKS (Probable). Atrochrysone carboxylic acid is decarboxylated by the decarboxylase dmxR15, and oxidized by the anthrone oxygenase dmxR16 to yield emodin (Probable). Emodin is then reduced to emodin hydroquinone by the oxidoreductase dmxR7 (Probable). A-ring reduction by the short chain dehydrogenase dmxR18, dehydration by the scytalone dehydratase-like protein dmxR17 and probable spontaneous re-oxidation, results in overall deoxygenation to chrysophanol (PubMed:30996871). Baeyer-Villiger oxidation by the Baeyer-Villiger monooxygenase (BVMO) dmxR6 then yields monodictylactone in equilibrium with monodictyphenone (PubMed:30996871). In the case of the cryptosporioptides biosynthesis, monodictylactone is reduced at C-12 to an alcohol (by the short chain dehydrogenases dmxR12 or dmxR8) and hydroxylated at C-5 by dmxR9, yielding the electron-rich aromatic which could eliminate H(2)O to form the ortho-quinonemethide, followed by tautomerisation to paraquinone and complete the formal reduction to produce the 10-methylgroup (Probable). Conjugate addition of C-4a-OH to the resulting paraquinone by the monooxygenase dmxR10 then gives cyclohexadienone, which is then reduced at C-5 by the short chain dehydrogenase dmxR3 to give the dihydroxanthone (Probable). The 6,7-epoxide in the cryptosporioptides could be introduced by the cytochrome P450 monooxygenase dmxL3 (Probable). The highly reducing PKS dmxL2 manufactures butyrate, which is further carboxylated by dmxL1 to form ethylmalonate (PubMed:30996871). It is not yet clear whether the carboxylation occurs while the butyrate is attached to the ACP of dmxL2, but this unusual fungal metabolite could then be esterified to O-5 by the O-acetyltransferase dmxR13 (PubMed:30996871). Finally, dimerization performed by dmxR5 gives the observed dimers cryptosporioptides A, B and C as the final products of the pathway (PubMed:30996871).</text>
</comment>
<comment type="pathway">
    <text evidence="4">Secondary metabolite biosynthesis.</text>
</comment>
<comment type="similarity">
    <text evidence="3">Belongs to the avfA family.</text>
</comment>
<evidence type="ECO:0000269" key="1">
    <source>
    </source>
</evidence>
<evidence type="ECO:0000303" key="2">
    <source>
    </source>
</evidence>
<evidence type="ECO:0000305" key="3"/>
<evidence type="ECO:0000305" key="4">
    <source>
    </source>
</evidence>
<accession>A0A4P8DJV0</accession>
<proteinExistence type="inferred from homology"/>
<dbReference type="EC" id="1.-.-.-" evidence="4"/>
<dbReference type="EMBL" id="MK182094">
    <property type="protein sequence ID" value="QCL09101.1"/>
    <property type="molecule type" value="Genomic_DNA"/>
</dbReference>
<dbReference type="SMR" id="A0A4P8DJV0"/>
<dbReference type="GO" id="GO:0004497">
    <property type="term" value="F:monooxygenase activity"/>
    <property type="evidence" value="ECO:0007669"/>
    <property type="project" value="UniProtKB-KW"/>
</dbReference>
<dbReference type="Gene3D" id="3.10.450.50">
    <property type="match status" value="1"/>
</dbReference>
<dbReference type="InterPro" id="IPR050977">
    <property type="entry name" value="Fungal_Meroterpenoid_Isomerase"/>
</dbReference>
<dbReference type="InterPro" id="IPR032710">
    <property type="entry name" value="NTF2-like_dom_sf"/>
</dbReference>
<dbReference type="PANTHER" id="PTHR39598:SF1">
    <property type="entry name" value="AUSTINOID BIOSYNTHESIS CLUSTERS PROTEIN F-RELATED"/>
    <property type="match status" value="1"/>
</dbReference>
<dbReference type="PANTHER" id="PTHR39598">
    <property type="entry name" value="AUSTINOL SYNTHESIS PROTEIN F-RELATED"/>
    <property type="match status" value="1"/>
</dbReference>
<dbReference type="SUPFAM" id="SSF54427">
    <property type="entry name" value="NTF2-like"/>
    <property type="match status" value="1"/>
</dbReference>
<reference key="1">
    <citation type="journal article" date="2019" name="Chem. Sci.">
        <title>Structure revision of cryptosporioptides and determination of the genetic basis for dimeric xanthone biosynthesis in fungi.</title>
        <authorList>
            <person name="Greco C."/>
            <person name="de Mattos-Shipley K."/>
            <person name="Bailey A.M."/>
            <person name="Mulholland N.P."/>
            <person name="Vincent J.L."/>
            <person name="Willis C.L."/>
            <person name="Cox R.J."/>
            <person name="Simpson T.J."/>
        </authorList>
    </citation>
    <scope>NUCLEOTIDE SEQUENCE [GENOMIC DNA]</scope>
    <scope>FUNCTION</scope>
    <scope>PATHWAY</scope>
    <source>
        <strain>8999</strain>
    </source>
</reference>
<keyword id="KW-0503">Monooxygenase</keyword>
<keyword id="KW-0560">Oxidoreductase</keyword>